<keyword id="KW-0238">DNA-binding</keyword>
<keyword id="KW-0479">Metal-binding</keyword>
<keyword id="KW-0539">Nucleus</keyword>
<keyword id="KW-1185">Reference proteome</keyword>
<keyword id="KW-0804">Transcription</keyword>
<keyword id="KW-0805">Transcription regulation</keyword>
<keyword id="KW-0862">Zinc</keyword>
<proteinExistence type="predicted"/>
<evidence type="ECO:0000255" key="1">
    <source>
        <dbReference type="PROSITE-ProRule" id="PRU00227"/>
    </source>
</evidence>
<evidence type="ECO:0000256" key="2">
    <source>
        <dbReference type="SAM" id="MobiDB-lite"/>
    </source>
</evidence>
<evidence type="ECO:0000305" key="3"/>
<comment type="subcellular location">
    <subcellularLocation>
        <location evidence="3">Nucleus</location>
    </subcellularLocation>
</comment>
<reference key="1">
    <citation type="journal article" date="2002" name="Nature">
        <title>The genome sequence of Schizosaccharomyces pombe.</title>
        <authorList>
            <person name="Wood V."/>
            <person name="Gwilliam R."/>
            <person name="Rajandream M.A."/>
            <person name="Lyne M.H."/>
            <person name="Lyne R."/>
            <person name="Stewart A."/>
            <person name="Sgouros J.G."/>
            <person name="Peat N."/>
            <person name="Hayles J."/>
            <person name="Baker S.G."/>
            <person name="Basham D."/>
            <person name="Bowman S."/>
            <person name="Brooks K."/>
            <person name="Brown D."/>
            <person name="Brown S."/>
            <person name="Chillingworth T."/>
            <person name="Churcher C.M."/>
            <person name="Collins M."/>
            <person name="Connor R."/>
            <person name="Cronin A."/>
            <person name="Davis P."/>
            <person name="Feltwell T."/>
            <person name="Fraser A."/>
            <person name="Gentles S."/>
            <person name="Goble A."/>
            <person name="Hamlin N."/>
            <person name="Harris D.E."/>
            <person name="Hidalgo J."/>
            <person name="Hodgson G."/>
            <person name="Holroyd S."/>
            <person name="Hornsby T."/>
            <person name="Howarth S."/>
            <person name="Huckle E.J."/>
            <person name="Hunt S."/>
            <person name="Jagels K."/>
            <person name="James K.D."/>
            <person name="Jones L."/>
            <person name="Jones M."/>
            <person name="Leather S."/>
            <person name="McDonald S."/>
            <person name="McLean J."/>
            <person name="Mooney P."/>
            <person name="Moule S."/>
            <person name="Mungall K.L."/>
            <person name="Murphy L.D."/>
            <person name="Niblett D."/>
            <person name="Odell C."/>
            <person name="Oliver K."/>
            <person name="O'Neil S."/>
            <person name="Pearson D."/>
            <person name="Quail M.A."/>
            <person name="Rabbinowitsch E."/>
            <person name="Rutherford K.M."/>
            <person name="Rutter S."/>
            <person name="Saunders D."/>
            <person name="Seeger K."/>
            <person name="Sharp S."/>
            <person name="Skelton J."/>
            <person name="Simmonds M.N."/>
            <person name="Squares R."/>
            <person name="Squares S."/>
            <person name="Stevens K."/>
            <person name="Taylor K."/>
            <person name="Taylor R.G."/>
            <person name="Tivey A."/>
            <person name="Walsh S.V."/>
            <person name="Warren T."/>
            <person name="Whitehead S."/>
            <person name="Woodward J.R."/>
            <person name="Volckaert G."/>
            <person name="Aert R."/>
            <person name="Robben J."/>
            <person name="Grymonprez B."/>
            <person name="Weltjens I."/>
            <person name="Vanstreels E."/>
            <person name="Rieger M."/>
            <person name="Schaefer M."/>
            <person name="Mueller-Auer S."/>
            <person name="Gabel C."/>
            <person name="Fuchs M."/>
            <person name="Duesterhoeft A."/>
            <person name="Fritzc C."/>
            <person name="Holzer E."/>
            <person name="Moestl D."/>
            <person name="Hilbert H."/>
            <person name="Borzym K."/>
            <person name="Langer I."/>
            <person name="Beck A."/>
            <person name="Lehrach H."/>
            <person name="Reinhardt R."/>
            <person name="Pohl T.M."/>
            <person name="Eger P."/>
            <person name="Zimmermann W."/>
            <person name="Wedler H."/>
            <person name="Wambutt R."/>
            <person name="Purnelle B."/>
            <person name="Goffeau A."/>
            <person name="Cadieu E."/>
            <person name="Dreano S."/>
            <person name="Gloux S."/>
            <person name="Lelaure V."/>
            <person name="Mottier S."/>
            <person name="Galibert F."/>
            <person name="Aves S.J."/>
            <person name="Xiang Z."/>
            <person name="Hunt C."/>
            <person name="Moore K."/>
            <person name="Hurst S.M."/>
            <person name="Lucas M."/>
            <person name="Rochet M."/>
            <person name="Gaillardin C."/>
            <person name="Tallada V.A."/>
            <person name="Garzon A."/>
            <person name="Thode G."/>
            <person name="Daga R.R."/>
            <person name="Cruzado L."/>
            <person name="Jimenez J."/>
            <person name="Sanchez M."/>
            <person name="del Rey F."/>
            <person name="Benito J."/>
            <person name="Dominguez A."/>
            <person name="Revuelta J.L."/>
            <person name="Moreno S."/>
            <person name="Armstrong J."/>
            <person name="Forsburg S.L."/>
            <person name="Cerutti L."/>
            <person name="Lowe T."/>
            <person name="McCombie W.R."/>
            <person name="Paulsen I."/>
            <person name="Potashkin J."/>
            <person name="Shpakovski G.V."/>
            <person name="Ussery D."/>
            <person name="Barrell B.G."/>
            <person name="Nurse P."/>
        </authorList>
    </citation>
    <scope>NUCLEOTIDE SEQUENCE [LARGE SCALE GENOMIC DNA]</scope>
    <source>
        <strain>972 / ATCC 24843</strain>
    </source>
</reference>
<feature type="chain" id="PRO_0000115009" description="Uncharacterized transcriptional regulatory protein C3H8.08c">
    <location>
        <begin position="1"/>
        <end position="563"/>
    </location>
</feature>
<feature type="DNA-binding region" description="Zn(2)-C6 fungal-type" evidence="1">
    <location>
        <begin position="19"/>
        <end position="45"/>
    </location>
</feature>
<feature type="region of interest" description="Disordered" evidence="2">
    <location>
        <begin position="56"/>
        <end position="78"/>
    </location>
</feature>
<feature type="compositionally biased region" description="Polar residues" evidence="2">
    <location>
        <begin position="64"/>
        <end position="75"/>
    </location>
</feature>
<accession>Q10144</accession>
<gene>
    <name type="ORF">SPAC3H8.08c</name>
</gene>
<protein>
    <recommendedName>
        <fullName>Uncharacterized transcriptional regulatory protein C3H8.08c</fullName>
    </recommendedName>
</protein>
<dbReference type="EMBL" id="CU329670">
    <property type="protein sequence ID" value="CAA93165.1"/>
    <property type="molecule type" value="Genomic_DNA"/>
</dbReference>
<dbReference type="PIR" id="T38766">
    <property type="entry name" value="T38766"/>
</dbReference>
<dbReference type="RefSeq" id="NP_593001.1">
    <property type="nucleotide sequence ID" value="NM_001018400.2"/>
</dbReference>
<dbReference type="BioGRID" id="280050">
    <property type="interactions" value="13"/>
</dbReference>
<dbReference type="FunCoup" id="Q10144">
    <property type="interactions" value="272"/>
</dbReference>
<dbReference type="iPTMnet" id="Q10144"/>
<dbReference type="PaxDb" id="4896-SPAC3H8.08c.1"/>
<dbReference type="EnsemblFungi" id="SPAC3H8.08c.1">
    <property type="protein sequence ID" value="SPAC3H8.08c.1:pep"/>
    <property type="gene ID" value="SPAC3H8.08c"/>
</dbReference>
<dbReference type="KEGG" id="spo:2543636"/>
<dbReference type="PomBase" id="SPAC3H8.08c"/>
<dbReference type="VEuPathDB" id="FungiDB:SPAC3H8.08c"/>
<dbReference type="HOGENOM" id="CLU_037354_0_0_1"/>
<dbReference type="InParanoid" id="Q10144"/>
<dbReference type="OMA" id="KSCLNCR"/>
<dbReference type="PRO" id="PR:Q10144"/>
<dbReference type="Proteomes" id="UP000002485">
    <property type="component" value="Chromosome I"/>
</dbReference>
<dbReference type="GO" id="GO:0005829">
    <property type="term" value="C:cytosol"/>
    <property type="evidence" value="ECO:0007005"/>
    <property type="project" value="PomBase"/>
</dbReference>
<dbReference type="GO" id="GO:0005634">
    <property type="term" value="C:nucleus"/>
    <property type="evidence" value="ECO:0007005"/>
    <property type="project" value="PomBase"/>
</dbReference>
<dbReference type="GO" id="GO:0000981">
    <property type="term" value="F:DNA-binding transcription factor activity, RNA polymerase II-specific"/>
    <property type="evidence" value="ECO:0000318"/>
    <property type="project" value="GO_Central"/>
</dbReference>
<dbReference type="GO" id="GO:0000978">
    <property type="term" value="F:RNA polymerase II cis-regulatory region sequence-specific DNA binding"/>
    <property type="evidence" value="ECO:0000255"/>
    <property type="project" value="PomBase"/>
</dbReference>
<dbReference type="GO" id="GO:0008270">
    <property type="term" value="F:zinc ion binding"/>
    <property type="evidence" value="ECO:0000255"/>
    <property type="project" value="PomBase"/>
</dbReference>
<dbReference type="GO" id="GO:0045944">
    <property type="term" value="P:positive regulation of transcription by RNA polymerase II"/>
    <property type="evidence" value="ECO:0000318"/>
    <property type="project" value="GO_Central"/>
</dbReference>
<dbReference type="CDD" id="cd12148">
    <property type="entry name" value="fungal_TF_MHR"/>
    <property type="match status" value="1"/>
</dbReference>
<dbReference type="CDD" id="cd00067">
    <property type="entry name" value="GAL4"/>
    <property type="match status" value="1"/>
</dbReference>
<dbReference type="Gene3D" id="4.10.240.10">
    <property type="entry name" value="Zn(2)-C6 fungal-type DNA-binding domain"/>
    <property type="match status" value="1"/>
</dbReference>
<dbReference type="InterPro" id="IPR050675">
    <property type="entry name" value="OAF3"/>
</dbReference>
<dbReference type="InterPro" id="IPR036864">
    <property type="entry name" value="Zn2-C6_fun-type_DNA-bd_sf"/>
</dbReference>
<dbReference type="InterPro" id="IPR001138">
    <property type="entry name" value="Zn2Cys6_DnaBD"/>
</dbReference>
<dbReference type="PANTHER" id="PTHR31069">
    <property type="entry name" value="OLEATE-ACTIVATED TRANSCRIPTION FACTOR 1-RELATED"/>
    <property type="match status" value="1"/>
</dbReference>
<dbReference type="PANTHER" id="PTHR31069:SF12">
    <property type="entry name" value="TRANSCRIPTION FACTOR DOMAIN-CONTAINING PROTEIN"/>
    <property type="match status" value="1"/>
</dbReference>
<dbReference type="Pfam" id="PF00172">
    <property type="entry name" value="Zn_clus"/>
    <property type="match status" value="1"/>
</dbReference>
<dbReference type="SMART" id="SM00066">
    <property type="entry name" value="GAL4"/>
    <property type="match status" value="1"/>
</dbReference>
<dbReference type="SUPFAM" id="SSF57701">
    <property type="entry name" value="Zn2/Cys6 DNA-binding domain"/>
    <property type="match status" value="1"/>
</dbReference>
<dbReference type="PROSITE" id="PS00463">
    <property type="entry name" value="ZN2_CY6_FUNGAL_1"/>
    <property type="match status" value="1"/>
</dbReference>
<dbReference type="PROSITE" id="PS50048">
    <property type="entry name" value="ZN2_CY6_FUNGAL_2"/>
    <property type="match status" value="1"/>
</dbReference>
<organism>
    <name type="scientific">Schizosaccharomyces pombe (strain 972 / ATCC 24843)</name>
    <name type="common">Fission yeast</name>
    <dbReference type="NCBI Taxonomy" id="284812"/>
    <lineage>
        <taxon>Eukaryota</taxon>
        <taxon>Fungi</taxon>
        <taxon>Dikarya</taxon>
        <taxon>Ascomycota</taxon>
        <taxon>Taphrinomycotina</taxon>
        <taxon>Schizosaccharomycetes</taxon>
        <taxon>Schizosaccharomycetales</taxon>
        <taxon>Schizosaccharomycetaceae</taxon>
        <taxon>Schizosaccharomyces</taxon>
    </lineage>
</organism>
<name>YAS8_SCHPO</name>
<sequence>MSSSPPALKKFRKRSPKSCLICRRRKVKCDRQQPCSRCKERNEVCTYADDTIDKMNVGPHPSHSENASDSETTLEVSPDINPKKNEKFDFYGWRSLFELIKYRKDSDMCSSRPSFSIQAYSSYKDNVVVESLANLLPPFCISQKIVNLFFKTLNVVCPIYDQETVEKSLNNIESPESFSYEDAFTLLPIIAATIQLSDLPDVILNFYNSAGITPLESSRLINLKLNEISEQEYKHLCLPDKEIIQMLLLRAYATKFRTRIRGVNTDLCRSIHVSTLVTPLFQVTEKIGKNTSDLWFALCEIDGLECVLKYRPPFIQHDTYGRLKPLRCFFNDDISYNFHLLLGRLLDCGVSIYKSVHSLTVSKFIDKLESYESQLSLILVDIEAKFYDPSNEDIQFRYIFLKMVFWTARVNLYQCFITLDSGILEDEETIIGNLGESCIQCVRLLISQITILEKRGWLLVALLEIIHALMLAAFCRDKGFEVPSDLGDITLYVQERMVDIVTFDDGMAVRFGYVLRFINSMLHPNEPPMQDAEPETTEDPSKLFADIFDFTSNYFIPSALLDQ</sequence>